<protein>
    <recommendedName>
        <fullName>Movement protein TGBp3</fullName>
    </recommendedName>
    <alternativeName>
        <fullName>7 kDa protein</fullName>
    </alternativeName>
    <alternativeName>
        <fullName>Triple gene block 3 protein</fullName>
        <shortName>TGBp3</shortName>
    </alternativeName>
</protein>
<keyword id="KW-1038">Host endoplasmic reticulum</keyword>
<keyword id="KW-1043">Host membrane</keyword>
<keyword id="KW-0472">Membrane</keyword>
<keyword id="KW-0812">Transmembrane</keyword>
<keyword id="KW-1133">Transmembrane helix</keyword>
<keyword id="KW-0813">Transport</keyword>
<keyword id="KW-0916">Viral movement protein</keyword>
<accession>P15405</accession>
<dbReference type="EMBL" id="X16636">
    <property type="protein sequence ID" value="CAA34631.1"/>
    <property type="molecule type" value="Genomic_RNA"/>
</dbReference>
<dbReference type="PIR" id="S35113">
    <property type="entry name" value="S35113"/>
</dbReference>
<dbReference type="Proteomes" id="UP000007628">
    <property type="component" value="Genome"/>
</dbReference>
<dbReference type="GO" id="GO:0044167">
    <property type="term" value="C:host cell endoplasmic reticulum membrane"/>
    <property type="evidence" value="ECO:0007669"/>
    <property type="project" value="UniProtKB-SubCell"/>
</dbReference>
<dbReference type="GO" id="GO:0016020">
    <property type="term" value="C:membrane"/>
    <property type="evidence" value="ECO:0007669"/>
    <property type="project" value="UniProtKB-KW"/>
</dbReference>
<dbReference type="GO" id="GO:0046740">
    <property type="term" value="P:transport of virus in host, cell to cell"/>
    <property type="evidence" value="ECO:0007669"/>
    <property type="project" value="UniProtKB-KW"/>
</dbReference>
<dbReference type="InterPro" id="IPR003411">
    <property type="entry name" value="TGBp3"/>
</dbReference>
<dbReference type="Pfam" id="PF02495">
    <property type="entry name" value="TGBp3"/>
    <property type="match status" value="1"/>
</dbReference>
<gene>
    <name type="ORF">ORF4</name>
</gene>
<organismHost>
    <name type="scientific">Trifolium</name>
    <dbReference type="NCBI Taxonomy" id="3898"/>
</organismHost>
<comment type="function">
    <text evidence="1">Plays a role in viral cell-to-cell propagation, by facilitating genome transport to neighboring plant cells through plasmosdesmata. May induce the formation of granular vesicles derived from the Endoplasmic reticulum, which align on actin filaments (By similarity).</text>
</comment>
<comment type="subcellular location">
    <subcellularLocation>
        <location evidence="1">Host endoplasmic reticulum membrane</location>
    </subcellularLocation>
</comment>
<comment type="miscellaneous">
    <text>TGBp1, TGBp2 and TGBp3 seem to act together for cell-to-cell propagation. TGBp1 is the main movement protein that physically cross the plasmodesma with the viral genome. TGBp2 and TGBp3 would facilitate TGBp1 function.</text>
</comment>
<comment type="similarity">
    <text evidence="3">Belongs to the Tymovirales TGBp3 protein family.</text>
</comment>
<sequence length="66" mass="7137">MDFTTLVIIGVYLLVFIVYFAKINTSMCTISISGASVEISGCDNPALFEILPNLKPFDHGLSVPSI</sequence>
<name>TGB3_WCMVO</name>
<organism>
    <name type="scientific">White clover mosaic virus (strain O)</name>
    <name type="common">WCMV</name>
    <dbReference type="NCBI Taxonomy" id="12190"/>
    <lineage>
        <taxon>Viruses</taxon>
        <taxon>Riboviria</taxon>
        <taxon>Orthornavirae</taxon>
        <taxon>Kitrinoviricota</taxon>
        <taxon>Alsuviricetes</taxon>
        <taxon>Tymovirales</taxon>
        <taxon>Alphaflexiviridae</taxon>
        <taxon>Potexvirus</taxon>
        <taxon>White clover mosaic virus</taxon>
    </lineage>
</organism>
<evidence type="ECO:0000250" key="1"/>
<evidence type="ECO:0000255" key="2"/>
<evidence type="ECO:0000305" key="3"/>
<proteinExistence type="inferred from homology"/>
<reference key="1">
    <citation type="journal article" date="1990" name="Virology">
        <title>Infectious transcripts and nucleotide sequence of cloned cDNA of the potexvirus white clover mosaic virus.</title>
        <authorList>
            <person name="Beck D.L."/>
            <person name="Forster R.L.S."/>
            <person name="Bevan M.W."/>
            <person name="Boxen K.A."/>
            <person name="Lowe S.C."/>
            <person name="Gardner R.C."/>
        </authorList>
    </citation>
    <scope>NUCLEOTIDE SEQUENCE [GENOMIC RNA]</scope>
</reference>
<reference key="2">
    <citation type="journal article" date="2005" name="Mol. Plant Microbe Interact.">
        <title>A new cell-to-cell transport model for Potexviruses.</title>
        <authorList>
            <person name="Verchot-Lubicz J."/>
        </authorList>
    </citation>
    <scope>REVIEW</scope>
</reference>
<feature type="chain" id="PRO_0000222611" description="Movement protein TGBp3">
    <location>
        <begin position="1"/>
        <end position="66"/>
    </location>
</feature>
<feature type="topological domain" description="Lumenal" evidence="2">
    <location>
        <begin position="1"/>
        <end position="2"/>
    </location>
</feature>
<feature type="transmembrane region" description="Helical" evidence="2">
    <location>
        <begin position="3"/>
        <end position="23"/>
    </location>
</feature>
<feature type="topological domain" description="Cytoplasmic" evidence="2">
    <location>
        <begin position="24"/>
        <end position="66"/>
    </location>
</feature>